<comment type="function">
    <text evidence="1">May play a role in Cajal bodies formation.</text>
</comment>
<comment type="subcellular location">
    <subcellularLocation>
        <location evidence="1">Nucleus</location>
        <location evidence="1">Cajal body</location>
    </subcellularLocation>
</comment>
<comment type="similarity">
    <text evidence="2">Belongs to the FAM118 family.</text>
</comment>
<name>F118B_BOVIN</name>
<sequence>MASTGSQASDIDKILGFFSDGAPPTKKPRKLLPSLKTKKPRELVLVIGTGISAAVAPQVPALKSWKGLIQALLDAAIDFDLLEDEESKKFQKCLHEDKNLVHVAHDLIQKLSPRTSNVRSTFFKDCLYEVFDDLESKMEDSGKQLLQSVLHLMENGALVLTTNFDNLLELYAADQGKQLESLDLTDEKKVLEWAQEKRKLSVLHIHGVYTNPSGIVLHPAGYQNVLRNTEVMREIQKLYENKSFLFLGCGWTVDDTTFQALFLEAVKHKSDLEHFMLVRRGDVDEFKKLRENMLDKGIKVISYGNDYADLPEYFKRLTCEISTRGRSAGIVREGQLNGSSTAHSEIRDHST</sequence>
<proteinExistence type="evidence at transcript level"/>
<gene>
    <name type="primary">FAM118B</name>
</gene>
<keyword id="KW-0007">Acetylation</keyword>
<keyword id="KW-0539">Nucleus</keyword>
<keyword id="KW-0597">Phosphoprotein</keyword>
<keyword id="KW-1185">Reference proteome</keyword>
<dbReference type="EMBL" id="BT021043">
    <property type="protein sequence ID" value="AAX09060.1"/>
    <property type="molecule type" value="mRNA"/>
</dbReference>
<dbReference type="EMBL" id="BC118445">
    <property type="protein sequence ID" value="AAI18446.1"/>
    <property type="molecule type" value="mRNA"/>
</dbReference>
<dbReference type="RefSeq" id="NP_001015677.1">
    <property type="nucleotide sequence ID" value="NM_001015677.2"/>
</dbReference>
<dbReference type="RefSeq" id="XP_059738977.1">
    <property type="nucleotide sequence ID" value="XM_059882994.1"/>
</dbReference>
<dbReference type="SMR" id="Q5E977"/>
<dbReference type="FunCoup" id="Q5E977">
    <property type="interactions" value="2209"/>
</dbReference>
<dbReference type="STRING" id="9913.ENSBTAP00000016141"/>
<dbReference type="PaxDb" id="9913-ENSBTAP00000016141"/>
<dbReference type="GeneID" id="540626"/>
<dbReference type="KEGG" id="bta:540626"/>
<dbReference type="CTD" id="79607"/>
<dbReference type="VEuPathDB" id="HostDB:ENSBTAG00000012169"/>
<dbReference type="eggNOG" id="ENOG502QSNY">
    <property type="taxonomic scope" value="Eukaryota"/>
</dbReference>
<dbReference type="HOGENOM" id="CLU_1291510_0_0_1"/>
<dbReference type="InParanoid" id="Q5E977"/>
<dbReference type="OMA" id="WGKQNEL"/>
<dbReference type="OrthoDB" id="9940519at2759"/>
<dbReference type="Proteomes" id="UP000009136">
    <property type="component" value="Chromosome 29"/>
</dbReference>
<dbReference type="Bgee" id="ENSBTAG00000012169">
    <property type="expression patterns" value="Expressed in oocyte and 106 other cell types or tissues"/>
</dbReference>
<dbReference type="GO" id="GO:0015030">
    <property type="term" value="C:Cajal body"/>
    <property type="evidence" value="ECO:0007669"/>
    <property type="project" value="UniProtKB-SubCell"/>
</dbReference>
<dbReference type="InterPro" id="IPR038916">
    <property type="entry name" value="FAM118"/>
</dbReference>
<dbReference type="PANTHER" id="PTHR28623">
    <property type="entry name" value="PROTEIN FAM118B"/>
    <property type="match status" value="1"/>
</dbReference>
<dbReference type="PANTHER" id="PTHR28623:SF1">
    <property type="entry name" value="PROTEIN FAM118B"/>
    <property type="match status" value="1"/>
</dbReference>
<dbReference type="Pfam" id="PF13289">
    <property type="entry name" value="SIR2_2"/>
    <property type="match status" value="1"/>
</dbReference>
<organism>
    <name type="scientific">Bos taurus</name>
    <name type="common">Bovine</name>
    <dbReference type="NCBI Taxonomy" id="9913"/>
    <lineage>
        <taxon>Eukaryota</taxon>
        <taxon>Metazoa</taxon>
        <taxon>Chordata</taxon>
        <taxon>Craniata</taxon>
        <taxon>Vertebrata</taxon>
        <taxon>Euteleostomi</taxon>
        <taxon>Mammalia</taxon>
        <taxon>Eutheria</taxon>
        <taxon>Laurasiatheria</taxon>
        <taxon>Artiodactyla</taxon>
        <taxon>Ruminantia</taxon>
        <taxon>Pecora</taxon>
        <taxon>Bovidae</taxon>
        <taxon>Bovinae</taxon>
        <taxon>Bos</taxon>
    </lineage>
</organism>
<protein>
    <recommendedName>
        <fullName>Protein FAM118B</fullName>
    </recommendedName>
</protein>
<accession>Q5E977</accession>
<reference key="1">
    <citation type="journal article" date="2005" name="BMC Genomics">
        <title>Characterization of 954 bovine full-CDS cDNA sequences.</title>
        <authorList>
            <person name="Harhay G.P."/>
            <person name="Sonstegard T.S."/>
            <person name="Keele J.W."/>
            <person name="Heaton M.P."/>
            <person name="Clawson M.L."/>
            <person name="Snelling W.M."/>
            <person name="Wiedmann R.T."/>
            <person name="Van Tassell C.P."/>
            <person name="Smith T.P.L."/>
        </authorList>
    </citation>
    <scope>NUCLEOTIDE SEQUENCE [LARGE SCALE MRNA]</scope>
</reference>
<reference key="2">
    <citation type="submission" date="2006-06" db="EMBL/GenBank/DDBJ databases">
        <authorList>
            <consortium name="NIH - Mammalian Gene Collection (MGC) project"/>
        </authorList>
    </citation>
    <scope>NUCLEOTIDE SEQUENCE [LARGE SCALE MRNA]</scope>
    <source>
        <strain>Hereford</strain>
        <tissue>Fetal cerebellum</tissue>
    </source>
</reference>
<feature type="initiator methionine" description="Removed" evidence="1">
    <location>
        <position position="1"/>
    </location>
</feature>
<feature type="chain" id="PRO_0000295102" description="Protein FAM118B">
    <location>
        <begin position="2"/>
        <end position="351"/>
    </location>
</feature>
<feature type="modified residue" description="N-acetylalanine" evidence="1">
    <location>
        <position position="2"/>
    </location>
</feature>
<feature type="modified residue" description="Phosphoserine" evidence="1">
    <location>
        <position position="9"/>
    </location>
</feature>
<evidence type="ECO:0000250" key="1">
    <source>
        <dbReference type="UniProtKB" id="Q9BPY3"/>
    </source>
</evidence>
<evidence type="ECO:0000305" key="2"/>